<organism>
    <name type="scientific">Salmonella arizonae (strain ATCC BAA-731 / CDC346-86 / RSK2980)</name>
    <dbReference type="NCBI Taxonomy" id="41514"/>
    <lineage>
        <taxon>Bacteria</taxon>
        <taxon>Pseudomonadati</taxon>
        <taxon>Pseudomonadota</taxon>
        <taxon>Gammaproteobacteria</taxon>
        <taxon>Enterobacterales</taxon>
        <taxon>Enterobacteriaceae</taxon>
        <taxon>Salmonella</taxon>
    </lineage>
</organism>
<proteinExistence type="inferred from homology"/>
<protein>
    <recommendedName>
        <fullName evidence="1">Putative transport protein YidE</fullName>
    </recommendedName>
</protein>
<comment type="subcellular location">
    <subcellularLocation>
        <location evidence="1">Cell membrane</location>
        <topology evidence="1">Multi-pass membrane protein</topology>
    </subcellularLocation>
</comment>
<comment type="similarity">
    <text evidence="1">Belongs to the AAE transporter (TC 2.A.81) family. YidE subfamily.</text>
</comment>
<sequence>MSDIALTVSVLALVAVVGLWIGNIKVRGVGFGIGGVLFGGIIVGHFVDQAGMTLSGDMLHFIQEFGLILFVYTIGIQVGPGFFASLRVSGLRLNLFAVLIVIMGGLVTAILHKIFAIPLPVVLGIFSGAVTNTPALGAGQQILRDLGTPVDLVDQMGMSYAMAYPFGICGILLTMWLMRLIFRVNVEAEAQKHESSLANGHSLIQTMNIRVENPNLNNMAIQDVPILNSDKIICSRLKRDDTLMVPSPGTIIQAGDLLHLVGQSTDLHNAQLVIGKEVDTSLSTRGTDLRVERVVVTNEKVLGKRIRDLHFKERYDVVISRLNRAGVELVATSDASLQFGDILNLVGRPASIDAVANVVGNAQQKLQQVQMLPVFIGIGLGVLLGSIPLFVPGFPVALKLGLAGGPLIIALILGRIGSIGKLYWFMPPSANLALRELGIVLFLAVVGLKSGGNFVNTLTQGEGLSWIGYGIFITAIPLITVGLLARIFAKMNYLTLCGMLAGSMTDPPALAFANNLHATSGAAALSYATVYPLVMFLRIITPQLLAVIFWGIG</sequence>
<dbReference type="EMBL" id="CP000880">
    <property type="protein sequence ID" value="ABX23633.1"/>
    <property type="molecule type" value="Genomic_DNA"/>
</dbReference>
<dbReference type="SMR" id="A9MJX2"/>
<dbReference type="STRING" id="41514.SARI_03839"/>
<dbReference type="KEGG" id="ses:SARI_03839"/>
<dbReference type="HOGENOM" id="CLU_035023_3_1_6"/>
<dbReference type="Proteomes" id="UP000002084">
    <property type="component" value="Chromosome"/>
</dbReference>
<dbReference type="GO" id="GO:0005886">
    <property type="term" value="C:plasma membrane"/>
    <property type="evidence" value="ECO:0007669"/>
    <property type="project" value="UniProtKB-SubCell"/>
</dbReference>
<dbReference type="GO" id="GO:0008324">
    <property type="term" value="F:monoatomic cation transmembrane transporter activity"/>
    <property type="evidence" value="ECO:0007669"/>
    <property type="project" value="InterPro"/>
</dbReference>
<dbReference type="GO" id="GO:0006813">
    <property type="term" value="P:potassium ion transport"/>
    <property type="evidence" value="ECO:0007669"/>
    <property type="project" value="InterPro"/>
</dbReference>
<dbReference type="FunFam" id="3.30.70.1450:FF:000004">
    <property type="entry name" value="Putative transport protein YidE"/>
    <property type="match status" value="1"/>
</dbReference>
<dbReference type="Gene3D" id="3.30.70.1450">
    <property type="entry name" value="Regulator of K+ conductance, C-terminal domain"/>
    <property type="match status" value="2"/>
</dbReference>
<dbReference type="HAMAP" id="MF_01016">
    <property type="entry name" value="YidE"/>
    <property type="match status" value="1"/>
</dbReference>
<dbReference type="InterPro" id="IPR050144">
    <property type="entry name" value="AAE_transporter"/>
</dbReference>
<dbReference type="InterPro" id="IPR006037">
    <property type="entry name" value="RCK_C"/>
</dbReference>
<dbReference type="InterPro" id="IPR036721">
    <property type="entry name" value="RCK_C_sf"/>
</dbReference>
<dbReference type="InterPro" id="IPR023018">
    <property type="entry name" value="Transpt_YidE_put"/>
</dbReference>
<dbReference type="InterPro" id="IPR006512">
    <property type="entry name" value="YidE_YbjL"/>
</dbReference>
<dbReference type="NCBIfam" id="NF003007">
    <property type="entry name" value="PRK03818.1"/>
    <property type="match status" value="1"/>
</dbReference>
<dbReference type="NCBIfam" id="TIGR01625">
    <property type="entry name" value="YidE_YbjL_dupl"/>
    <property type="match status" value="2"/>
</dbReference>
<dbReference type="PANTHER" id="PTHR30445">
    <property type="entry name" value="K(+)_H(+) ANTIPORTER SUBUNIT KHTT"/>
    <property type="match status" value="1"/>
</dbReference>
<dbReference type="PANTHER" id="PTHR30445:SF3">
    <property type="entry name" value="TRANSPORT PROTEIN YIDE-RELATED"/>
    <property type="match status" value="1"/>
</dbReference>
<dbReference type="Pfam" id="PF06826">
    <property type="entry name" value="Asp-Al_Ex"/>
    <property type="match status" value="2"/>
</dbReference>
<dbReference type="Pfam" id="PF02080">
    <property type="entry name" value="TrkA_C"/>
    <property type="match status" value="2"/>
</dbReference>
<dbReference type="SUPFAM" id="SSF116726">
    <property type="entry name" value="TrkA C-terminal domain-like"/>
    <property type="match status" value="2"/>
</dbReference>
<dbReference type="PROSITE" id="PS51202">
    <property type="entry name" value="RCK_C"/>
    <property type="match status" value="2"/>
</dbReference>
<feature type="chain" id="PRO_1000084124" description="Putative transport protein YidE">
    <location>
        <begin position="1"/>
        <end position="553"/>
    </location>
</feature>
<feature type="transmembrane region" description="Helical" evidence="1">
    <location>
        <begin position="4"/>
        <end position="24"/>
    </location>
</feature>
<feature type="transmembrane region" description="Helical" evidence="1">
    <location>
        <begin position="28"/>
        <end position="48"/>
    </location>
</feature>
<feature type="transmembrane region" description="Helical" evidence="1">
    <location>
        <begin position="65"/>
        <end position="85"/>
    </location>
</feature>
<feature type="transmembrane region" description="Helical" evidence="1">
    <location>
        <begin position="95"/>
        <end position="115"/>
    </location>
</feature>
<feature type="transmembrane region" description="Helical" evidence="1">
    <location>
        <begin position="158"/>
        <end position="178"/>
    </location>
</feature>
<feature type="transmembrane region" description="Helical" evidence="1">
    <location>
        <begin position="371"/>
        <end position="391"/>
    </location>
</feature>
<feature type="transmembrane region" description="Helical" evidence="1">
    <location>
        <begin position="403"/>
        <end position="425"/>
    </location>
</feature>
<feature type="transmembrane region" description="Helical" evidence="1">
    <location>
        <begin position="437"/>
        <end position="457"/>
    </location>
</feature>
<feature type="transmembrane region" description="Helical" evidence="1">
    <location>
        <begin position="464"/>
        <end position="484"/>
    </location>
</feature>
<feature type="transmembrane region" description="Helical" evidence="1">
    <location>
        <begin position="533"/>
        <end position="553"/>
    </location>
</feature>
<feature type="domain" description="RCK C-terminal 1" evidence="1">
    <location>
        <begin position="192"/>
        <end position="276"/>
    </location>
</feature>
<feature type="domain" description="RCK C-terminal 2" evidence="1">
    <location>
        <begin position="279"/>
        <end position="361"/>
    </location>
</feature>
<reference key="1">
    <citation type="submission" date="2007-11" db="EMBL/GenBank/DDBJ databases">
        <authorList>
            <consortium name="The Salmonella enterica serovar Arizonae Genome Sequencing Project"/>
            <person name="McClelland M."/>
            <person name="Sanderson E.K."/>
            <person name="Porwollik S."/>
            <person name="Spieth J."/>
            <person name="Clifton W.S."/>
            <person name="Fulton R."/>
            <person name="Chunyan W."/>
            <person name="Wollam A."/>
            <person name="Shah N."/>
            <person name="Pepin K."/>
            <person name="Bhonagiri V."/>
            <person name="Nash W."/>
            <person name="Johnson M."/>
            <person name="Thiruvilangam P."/>
            <person name="Wilson R."/>
        </authorList>
    </citation>
    <scope>NUCLEOTIDE SEQUENCE [LARGE SCALE GENOMIC DNA]</scope>
    <source>
        <strain>ATCC BAA-731 / CDC346-86 / RSK2980</strain>
    </source>
</reference>
<name>YIDE_SALAR</name>
<gene>
    <name evidence="1" type="primary">yidE</name>
    <name type="ordered locus">SARI_03839</name>
</gene>
<keyword id="KW-1003">Cell membrane</keyword>
<keyword id="KW-0472">Membrane</keyword>
<keyword id="KW-1185">Reference proteome</keyword>
<keyword id="KW-0677">Repeat</keyword>
<keyword id="KW-0812">Transmembrane</keyword>
<keyword id="KW-1133">Transmembrane helix</keyword>
<keyword id="KW-0813">Transport</keyword>
<evidence type="ECO:0000255" key="1">
    <source>
        <dbReference type="HAMAP-Rule" id="MF_01016"/>
    </source>
</evidence>
<accession>A9MJX2</accession>